<proteinExistence type="inferred from homology"/>
<organism>
    <name type="scientific">Hydrogenobaculum sp. (strain Y04AAS1)</name>
    <dbReference type="NCBI Taxonomy" id="380749"/>
    <lineage>
        <taxon>Bacteria</taxon>
        <taxon>Pseudomonadati</taxon>
        <taxon>Aquificota</taxon>
        <taxon>Aquificia</taxon>
        <taxon>Aquificales</taxon>
        <taxon>Aquificaceae</taxon>
        <taxon>Hydrogenobaculum</taxon>
    </lineage>
</organism>
<sequence>MAVPKRRTSRWRRNQRRAQAFFAKLKSFNMVKCPNCGEFAMPHRACPYCGYYRDKQVLEV</sequence>
<name>RL32_HYDS0</name>
<comment type="similarity">
    <text evidence="1">Belongs to the bacterial ribosomal protein bL32 family.</text>
</comment>
<reference key="1">
    <citation type="journal article" date="2009" name="J. Bacteriol.">
        <title>Complete and draft genome sequences of six members of the Aquificales.</title>
        <authorList>
            <person name="Reysenbach A.-L."/>
            <person name="Hamamura N."/>
            <person name="Podar M."/>
            <person name="Griffiths E."/>
            <person name="Ferreira S."/>
            <person name="Hochstein R."/>
            <person name="Heidelberg J."/>
            <person name="Johnson J."/>
            <person name="Mead D."/>
            <person name="Pohorille A."/>
            <person name="Sarmiento M."/>
            <person name="Schweighofer K."/>
            <person name="Seshadri R."/>
            <person name="Voytek M.A."/>
        </authorList>
    </citation>
    <scope>NUCLEOTIDE SEQUENCE [LARGE SCALE GENOMIC DNA]</scope>
    <source>
        <strain>Y04AAS1</strain>
    </source>
</reference>
<protein>
    <recommendedName>
        <fullName evidence="1">Large ribosomal subunit protein bL32</fullName>
    </recommendedName>
    <alternativeName>
        <fullName evidence="2">50S ribosomal protein L32</fullName>
    </alternativeName>
</protein>
<keyword id="KW-0687">Ribonucleoprotein</keyword>
<keyword id="KW-0689">Ribosomal protein</keyword>
<evidence type="ECO:0000255" key="1">
    <source>
        <dbReference type="HAMAP-Rule" id="MF_00340"/>
    </source>
</evidence>
<evidence type="ECO:0000305" key="2"/>
<gene>
    <name evidence="1" type="primary">rpmF</name>
    <name type="ordered locus">HY04AAS1_0233</name>
</gene>
<feature type="chain" id="PRO_1000120132" description="Large ribosomal subunit protein bL32">
    <location>
        <begin position="1"/>
        <end position="60"/>
    </location>
</feature>
<accession>B4U714</accession>
<dbReference type="EMBL" id="CP001130">
    <property type="protein sequence ID" value="ACG56925.1"/>
    <property type="molecule type" value="Genomic_DNA"/>
</dbReference>
<dbReference type="RefSeq" id="WP_012513282.1">
    <property type="nucleotide sequence ID" value="NC_011126.1"/>
</dbReference>
<dbReference type="SMR" id="B4U714"/>
<dbReference type="STRING" id="380749.HY04AAS1_0233"/>
<dbReference type="KEGG" id="hya:HY04AAS1_0233"/>
<dbReference type="eggNOG" id="COG0333">
    <property type="taxonomic scope" value="Bacteria"/>
</dbReference>
<dbReference type="HOGENOM" id="CLU_129084_1_3_0"/>
<dbReference type="OrthoDB" id="9812874at2"/>
<dbReference type="GO" id="GO:0015934">
    <property type="term" value="C:large ribosomal subunit"/>
    <property type="evidence" value="ECO:0007669"/>
    <property type="project" value="InterPro"/>
</dbReference>
<dbReference type="GO" id="GO:0003735">
    <property type="term" value="F:structural constituent of ribosome"/>
    <property type="evidence" value="ECO:0007669"/>
    <property type="project" value="InterPro"/>
</dbReference>
<dbReference type="GO" id="GO:0006412">
    <property type="term" value="P:translation"/>
    <property type="evidence" value="ECO:0007669"/>
    <property type="project" value="UniProtKB-UniRule"/>
</dbReference>
<dbReference type="Gene3D" id="1.20.5.640">
    <property type="entry name" value="Single helix bin"/>
    <property type="match status" value="1"/>
</dbReference>
<dbReference type="HAMAP" id="MF_00340">
    <property type="entry name" value="Ribosomal_bL32"/>
    <property type="match status" value="1"/>
</dbReference>
<dbReference type="InterPro" id="IPR002677">
    <property type="entry name" value="Ribosomal_bL32"/>
</dbReference>
<dbReference type="InterPro" id="IPR044957">
    <property type="entry name" value="Ribosomal_bL32_bact"/>
</dbReference>
<dbReference type="InterPro" id="IPR011332">
    <property type="entry name" value="Ribosomal_zn-bd"/>
</dbReference>
<dbReference type="NCBIfam" id="TIGR01031">
    <property type="entry name" value="rpmF_bact"/>
    <property type="match status" value="1"/>
</dbReference>
<dbReference type="PANTHER" id="PTHR35534">
    <property type="entry name" value="50S RIBOSOMAL PROTEIN L32"/>
    <property type="match status" value="1"/>
</dbReference>
<dbReference type="PANTHER" id="PTHR35534:SF1">
    <property type="entry name" value="LARGE RIBOSOMAL SUBUNIT PROTEIN BL32"/>
    <property type="match status" value="1"/>
</dbReference>
<dbReference type="Pfam" id="PF01783">
    <property type="entry name" value="Ribosomal_L32p"/>
    <property type="match status" value="1"/>
</dbReference>
<dbReference type="SUPFAM" id="SSF57829">
    <property type="entry name" value="Zn-binding ribosomal proteins"/>
    <property type="match status" value="1"/>
</dbReference>